<sequence>MGSFSIWHWLIVLLIVVLVFGTKKLKNIGSDLGGAVKGFKDGVRDGSTAPADPAQQVTANKSADANTVDVEAKQKS</sequence>
<accession>A2SE14</accession>
<proteinExistence type="inferred from homology"/>
<feature type="chain" id="PRO_1000044397" description="Sec-independent protein translocase protein TatA">
    <location>
        <begin position="1"/>
        <end position="76"/>
    </location>
</feature>
<feature type="transmembrane region" description="Helical" evidence="1">
    <location>
        <begin position="1"/>
        <end position="21"/>
    </location>
</feature>
<feature type="region of interest" description="Disordered" evidence="2">
    <location>
        <begin position="44"/>
        <end position="76"/>
    </location>
</feature>
<feature type="compositionally biased region" description="Polar residues" evidence="2">
    <location>
        <begin position="55"/>
        <end position="65"/>
    </location>
</feature>
<reference key="1">
    <citation type="journal article" date="2007" name="J. Bacteriol.">
        <title>Whole-genome analysis of the methyl tert-butyl ether-degrading beta-proteobacterium Methylibium petroleiphilum PM1.</title>
        <authorList>
            <person name="Kane S.R."/>
            <person name="Chakicherla A.Y."/>
            <person name="Chain P.S.G."/>
            <person name="Schmidt R."/>
            <person name="Shin M.W."/>
            <person name="Legler T.C."/>
            <person name="Scow K.M."/>
            <person name="Larimer F.W."/>
            <person name="Lucas S.M."/>
            <person name="Richardson P.M."/>
            <person name="Hristova K.R."/>
        </authorList>
    </citation>
    <scope>NUCLEOTIDE SEQUENCE [LARGE SCALE GENOMIC DNA]</scope>
    <source>
        <strain>ATCC BAA-1232 / LMG 22953 / PM1</strain>
    </source>
</reference>
<comment type="function">
    <text evidence="1">Part of the twin-arginine translocation (Tat) system that transports large folded proteins containing a characteristic twin-arginine motif in their signal peptide across membranes. TatA could form the protein-conducting channel of the Tat system.</text>
</comment>
<comment type="subunit">
    <text evidence="1">The Tat system comprises two distinct complexes: a TatABC complex, containing multiple copies of TatA, TatB and TatC subunits, and a separate TatA complex, containing only TatA subunits. Substrates initially bind to the TatABC complex, which probably triggers association of the separate TatA complex to form the active translocon.</text>
</comment>
<comment type="subcellular location">
    <subcellularLocation>
        <location evidence="1">Cell inner membrane</location>
        <topology evidence="1">Single-pass membrane protein</topology>
    </subcellularLocation>
</comment>
<comment type="similarity">
    <text evidence="1">Belongs to the TatA/E family.</text>
</comment>
<dbReference type="EMBL" id="CP000555">
    <property type="protein sequence ID" value="ABM93803.1"/>
    <property type="molecule type" value="Genomic_DNA"/>
</dbReference>
<dbReference type="RefSeq" id="WP_011828441.1">
    <property type="nucleotide sequence ID" value="NC_008825.1"/>
</dbReference>
<dbReference type="SMR" id="A2SE14"/>
<dbReference type="STRING" id="420662.Mpe_A0841"/>
<dbReference type="KEGG" id="mpt:Mpe_A0841"/>
<dbReference type="eggNOG" id="COG1826">
    <property type="taxonomic scope" value="Bacteria"/>
</dbReference>
<dbReference type="HOGENOM" id="CLU_086034_5_1_4"/>
<dbReference type="Proteomes" id="UP000000366">
    <property type="component" value="Chromosome"/>
</dbReference>
<dbReference type="GO" id="GO:0033281">
    <property type="term" value="C:TAT protein transport complex"/>
    <property type="evidence" value="ECO:0007669"/>
    <property type="project" value="UniProtKB-UniRule"/>
</dbReference>
<dbReference type="GO" id="GO:0008320">
    <property type="term" value="F:protein transmembrane transporter activity"/>
    <property type="evidence" value="ECO:0007669"/>
    <property type="project" value="UniProtKB-UniRule"/>
</dbReference>
<dbReference type="GO" id="GO:0043953">
    <property type="term" value="P:protein transport by the Tat complex"/>
    <property type="evidence" value="ECO:0007669"/>
    <property type="project" value="UniProtKB-UniRule"/>
</dbReference>
<dbReference type="Gene3D" id="1.20.5.3310">
    <property type="match status" value="1"/>
</dbReference>
<dbReference type="HAMAP" id="MF_00236">
    <property type="entry name" value="TatA_E"/>
    <property type="match status" value="1"/>
</dbReference>
<dbReference type="InterPro" id="IPR003369">
    <property type="entry name" value="TatA/B/E"/>
</dbReference>
<dbReference type="InterPro" id="IPR006312">
    <property type="entry name" value="TatA/E"/>
</dbReference>
<dbReference type="NCBIfam" id="NF002813">
    <property type="entry name" value="PRK02958.1"/>
    <property type="match status" value="1"/>
</dbReference>
<dbReference type="NCBIfam" id="TIGR01411">
    <property type="entry name" value="tatAE"/>
    <property type="match status" value="1"/>
</dbReference>
<dbReference type="PANTHER" id="PTHR42982">
    <property type="entry name" value="SEC-INDEPENDENT PROTEIN TRANSLOCASE PROTEIN TATA"/>
    <property type="match status" value="1"/>
</dbReference>
<dbReference type="PANTHER" id="PTHR42982:SF1">
    <property type="entry name" value="SEC-INDEPENDENT PROTEIN TRANSLOCASE PROTEIN TATA"/>
    <property type="match status" value="1"/>
</dbReference>
<dbReference type="Pfam" id="PF02416">
    <property type="entry name" value="TatA_B_E"/>
    <property type="match status" value="1"/>
</dbReference>
<name>TATA_METPP</name>
<organism>
    <name type="scientific">Methylibium petroleiphilum (strain ATCC BAA-1232 / LMG 22953 / PM1)</name>
    <dbReference type="NCBI Taxonomy" id="420662"/>
    <lineage>
        <taxon>Bacteria</taxon>
        <taxon>Pseudomonadati</taxon>
        <taxon>Pseudomonadota</taxon>
        <taxon>Betaproteobacteria</taxon>
        <taxon>Burkholderiales</taxon>
        <taxon>Sphaerotilaceae</taxon>
        <taxon>Methylibium</taxon>
    </lineage>
</organism>
<keyword id="KW-0997">Cell inner membrane</keyword>
<keyword id="KW-1003">Cell membrane</keyword>
<keyword id="KW-0472">Membrane</keyword>
<keyword id="KW-0653">Protein transport</keyword>
<keyword id="KW-1185">Reference proteome</keyword>
<keyword id="KW-0811">Translocation</keyword>
<keyword id="KW-0812">Transmembrane</keyword>
<keyword id="KW-1133">Transmembrane helix</keyword>
<keyword id="KW-0813">Transport</keyword>
<evidence type="ECO:0000255" key="1">
    <source>
        <dbReference type="HAMAP-Rule" id="MF_00236"/>
    </source>
</evidence>
<evidence type="ECO:0000256" key="2">
    <source>
        <dbReference type="SAM" id="MobiDB-lite"/>
    </source>
</evidence>
<gene>
    <name evidence="1" type="primary">tatA</name>
    <name type="ordered locus">Mpe_A0841</name>
</gene>
<protein>
    <recommendedName>
        <fullName evidence="1">Sec-independent protein translocase protein TatA</fullName>
    </recommendedName>
</protein>